<reference key="1">
    <citation type="journal article" date="2003" name="Lancet">
        <title>Sequencing and analysis of the genome of the Whipple's disease bacterium Tropheryma whipplei.</title>
        <authorList>
            <person name="Bentley S.D."/>
            <person name="Maiwald M."/>
            <person name="Murphy L.D."/>
            <person name="Pallen M.J."/>
            <person name="Yeats C.A."/>
            <person name="Dover L.G."/>
            <person name="Norbertczak H.T."/>
            <person name="Besra G.S."/>
            <person name="Quail M.A."/>
            <person name="Harris D.E."/>
            <person name="von Herbay A."/>
            <person name="Goble A."/>
            <person name="Rutter S."/>
            <person name="Squares R."/>
            <person name="Squares S."/>
            <person name="Barrell B.G."/>
            <person name="Parkhill J."/>
            <person name="Relman D.A."/>
        </authorList>
    </citation>
    <scope>NUCLEOTIDE SEQUENCE [LARGE SCALE GENOMIC DNA]</scope>
    <source>
        <strain>TW08/27</strain>
    </source>
</reference>
<sequence length="271" mass="29841">MCCDISKTLCVKPFIDPEEEISHRVSFLADYLRHSRASGYVLGISGGQDSALAGRLCQIAVESVRSIGFDATLWAIRLPYGQQFDESDAQTAMQFISPDEELSFDIRSATDNLCVDLNRSLGSKISDFNRGNIKARLRMVVQYAVAAHHDALVVGTDHAAEAVTGFFTKFGDGAADILPLYGLTKGQGRALLKALGACDSIIEKVPTADLLDDLPCLPDETELGLQYRDIDAFLEGKPVSEDITMAITERYKSTLHKRMPPITPHSTWWRK</sequence>
<dbReference type="EC" id="6.3.1.5" evidence="1"/>
<dbReference type="EMBL" id="BX251411">
    <property type="protein sequence ID" value="CAD67036.1"/>
    <property type="molecule type" value="Genomic_DNA"/>
</dbReference>
<dbReference type="SMR" id="Q83HW8"/>
<dbReference type="KEGG" id="tws:TW365"/>
<dbReference type="HOGENOM" id="CLU_059327_3_0_11"/>
<dbReference type="UniPathway" id="UPA00253">
    <property type="reaction ID" value="UER00333"/>
</dbReference>
<dbReference type="GO" id="GO:0005737">
    <property type="term" value="C:cytoplasm"/>
    <property type="evidence" value="ECO:0007669"/>
    <property type="project" value="InterPro"/>
</dbReference>
<dbReference type="GO" id="GO:0005524">
    <property type="term" value="F:ATP binding"/>
    <property type="evidence" value="ECO:0007669"/>
    <property type="project" value="UniProtKB-UniRule"/>
</dbReference>
<dbReference type="GO" id="GO:0004359">
    <property type="term" value="F:glutaminase activity"/>
    <property type="evidence" value="ECO:0007669"/>
    <property type="project" value="InterPro"/>
</dbReference>
<dbReference type="GO" id="GO:0046872">
    <property type="term" value="F:metal ion binding"/>
    <property type="evidence" value="ECO:0007669"/>
    <property type="project" value="UniProtKB-KW"/>
</dbReference>
<dbReference type="GO" id="GO:0003952">
    <property type="term" value="F:NAD+ synthase (glutamine-hydrolyzing) activity"/>
    <property type="evidence" value="ECO:0007669"/>
    <property type="project" value="InterPro"/>
</dbReference>
<dbReference type="GO" id="GO:0008795">
    <property type="term" value="F:NAD+ synthase activity"/>
    <property type="evidence" value="ECO:0007669"/>
    <property type="project" value="UniProtKB-UniRule"/>
</dbReference>
<dbReference type="GO" id="GO:0009435">
    <property type="term" value="P:NAD biosynthetic process"/>
    <property type="evidence" value="ECO:0007669"/>
    <property type="project" value="UniProtKB-UniRule"/>
</dbReference>
<dbReference type="CDD" id="cd00553">
    <property type="entry name" value="NAD_synthase"/>
    <property type="match status" value="1"/>
</dbReference>
<dbReference type="Gene3D" id="3.40.50.620">
    <property type="entry name" value="HUPs"/>
    <property type="match status" value="1"/>
</dbReference>
<dbReference type="HAMAP" id="MF_00193">
    <property type="entry name" value="NadE_ammonia_dep"/>
    <property type="match status" value="1"/>
</dbReference>
<dbReference type="InterPro" id="IPR022310">
    <property type="entry name" value="NAD/GMP_synthase"/>
</dbReference>
<dbReference type="InterPro" id="IPR003694">
    <property type="entry name" value="NAD_synthase"/>
</dbReference>
<dbReference type="InterPro" id="IPR022926">
    <property type="entry name" value="NH(3)-dep_NAD(+)_synth"/>
</dbReference>
<dbReference type="InterPro" id="IPR014729">
    <property type="entry name" value="Rossmann-like_a/b/a_fold"/>
</dbReference>
<dbReference type="NCBIfam" id="TIGR00552">
    <property type="entry name" value="nadE"/>
    <property type="match status" value="1"/>
</dbReference>
<dbReference type="NCBIfam" id="NF001979">
    <property type="entry name" value="PRK00768.1"/>
    <property type="match status" value="1"/>
</dbReference>
<dbReference type="PANTHER" id="PTHR23090">
    <property type="entry name" value="NH 3 /GLUTAMINE-DEPENDENT NAD + SYNTHETASE"/>
    <property type="match status" value="1"/>
</dbReference>
<dbReference type="PANTHER" id="PTHR23090:SF7">
    <property type="entry name" value="NH(3)-DEPENDENT NAD(+) SYNTHETASE"/>
    <property type="match status" value="1"/>
</dbReference>
<dbReference type="Pfam" id="PF02540">
    <property type="entry name" value="NAD_synthase"/>
    <property type="match status" value="1"/>
</dbReference>
<dbReference type="SUPFAM" id="SSF52402">
    <property type="entry name" value="Adenine nucleotide alpha hydrolases-like"/>
    <property type="match status" value="1"/>
</dbReference>
<feature type="chain" id="PRO_0000152213" description="NH(3)-dependent NAD(+) synthetase">
    <location>
        <begin position="1"/>
        <end position="271"/>
    </location>
</feature>
<feature type="binding site" evidence="1">
    <location>
        <begin position="43"/>
        <end position="50"/>
    </location>
    <ligand>
        <name>ATP</name>
        <dbReference type="ChEBI" id="CHEBI:30616"/>
    </ligand>
</feature>
<feature type="binding site" evidence="1">
    <location>
        <position position="49"/>
    </location>
    <ligand>
        <name>Mg(2+)</name>
        <dbReference type="ChEBI" id="CHEBI:18420"/>
    </ligand>
</feature>
<feature type="binding site" evidence="1">
    <location>
        <position position="136"/>
    </location>
    <ligand>
        <name>deamido-NAD(+)</name>
        <dbReference type="ChEBI" id="CHEBI:58437"/>
    </ligand>
</feature>
<feature type="binding site" evidence="1">
    <location>
        <position position="156"/>
    </location>
    <ligand>
        <name>ATP</name>
        <dbReference type="ChEBI" id="CHEBI:30616"/>
    </ligand>
</feature>
<feature type="binding site" evidence="1">
    <location>
        <position position="161"/>
    </location>
    <ligand>
        <name>Mg(2+)</name>
        <dbReference type="ChEBI" id="CHEBI:18420"/>
    </ligand>
</feature>
<feature type="binding site" evidence="1">
    <location>
        <position position="169"/>
    </location>
    <ligand>
        <name>deamido-NAD(+)</name>
        <dbReference type="ChEBI" id="CHEBI:58437"/>
    </ligand>
</feature>
<feature type="binding site" evidence="1">
    <location>
        <position position="176"/>
    </location>
    <ligand>
        <name>deamido-NAD(+)</name>
        <dbReference type="ChEBI" id="CHEBI:58437"/>
    </ligand>
</feature>
<feature type="binding site" evidence="1">
    <location>
        <position position="185"/>
    </location>
    <ligand>
        <name>ATP</name>
        <dbReference type="ChEBI" id="CHEBI:30616"/>
    </ligand>
</feature>
<feature type="binding site" evidence="1">
    <location>
        <position position="207"/>
    </location>
    <ligand>
        <name>ATP</name>
        <dbReference type="ChEBI" id="CHEBI:30616"/>
    </ligand>
</feature>
<feature type="binding site" evidence="1">
    <location>
        <begin position="256"/>
        <end position="257"/>
    </location>
    <ligand>
        <name>deamido-NAD(+)</name>
        <dbReference type="ChEBI" id="CHEBI:58437"/>
    </ligand>
</feature>
<evidence type="ECO:0000255" key="1">
    <source>
        <dbReference type="HAMAP-Rule" id="MF_00193"/>
    </source>
</evidence>
<accession>Q83HW8</accession>
<keyword id="KW-0067">ATP-binding</keyword>
<keyword id="KW-0436">Ligase</keyword>
<keyword id="KW-0460">Magnesium</keyword>
<keyword id="KW-0479">Metal-binding</keyword>
<keyword id="KW-0520">NAD</keyword>
<keyword id="KW-0547">Nucleotide-binding</keyword>
<comment type="function">
    <text evidence="1">Catalyzes the ATP-dependent amidation of deamido-NAD to form NAD. Uses ammonia as a nitrogen source.</text>
</comment>
<comment type="catalytic activity">
    <reaction evidence="1">
        <text>deamido-NAD(+) + NH4(+) + ATP = AMP + diphosphate + NAD(+) + H(+)</text>
        <dbReference type="Rhea" id="RHEA:21188"/>
        <dbReference type="ChEBI" id="CHEBI:15378"/>
        <dbReference type="ChEBI" id="CHEBI:28938"/>
        <dbReference type="ChEBI" id="CHEBI:30616"/>
        <dbReference type="ChEBI" id="CHEBI:33019"/>
        <dbReference type="ChEBI" id="CHEBI:57540"/>
        <dbReference type="ChEBI" id="CHEBI:58437"/>
        <dbReference type="ChEBI" id="CHEBI:456215"/>
        <dbReference type="EC" id="6.3.1.5"/>
    </reaction>
</comment>
<comment type="pathway">
    <text evidence="1">Cofactor biosynthesis; NAD(+) biosynthesis; NAD(+) from deamido-NAD(+) (ammonia route): step 1/1.</text>
</comment>
<comment type="subunit">
    <text evidence="1">Homodimer.</text>
</comment>
<comment type="similarity">
    <text evidence="1">Belongs to the NAD synthetase family.</text>
</comment>
<name>NADE_TROW8</name>
<gene>
    <name evidence="1" type="primary">nadE</name>
    <name type="ordered locus">TW365</name>
</gene>
<protein>
    <recommendedName>
        <fullName evidence="1">NH(3)-dependent NAD(+) synthetase</fullName>
        <ecNumber evidence="1">6.3.1.5</ecNumber>
    </recommendedName>
</protein>
<proteinExistence type="inferred from homology"/>
<organism>
    <name type="scientific">Tropheryma whipplei (strain TW08/27)</name>
    <name type="common">Whipple's bacillus</name>
    <dbReference type="NCBI Taxonomy" id="218496"/>
    <lineage>
        <taxon>Bacteria</taxon>
        <taxon>Bacillati</taxon>
        <taxon>Actinomycetota</taxon>
        <taxon>Actinomycetes</taxon>
        <taxon>Micrococcales</taxon>
        <taxon>Tropherymataceae</taxon>
        <taxon>Tropheryma</taxon>
    </lineage>
</organism>